<gene>
    <name evidence="1" type="primary">rpsF</name>
    <name type="ordered locus">PLES_53211</name>
</gene>
<sequence length="139" mass="16165">MRHYEIVFLVHPDQSEQVGGMVERYTKAIEEDGGKIHRLEDWGRRQLAYAINNVHKAHYVLMNVECSAKALAELEDNFRYNDAVIRNLVMRRDEAVTEQSEMLKAEESRNERRERRERPNDNAEGADGDDNSDSDNADE</sequence>
<accession>B7V1Z8</accession>
<proteinExistence type="inferred from homology"/>
<name>RS6_PSEA8</name>
<reference key="1">
    <citation type="journal article" date="2009" name="Genome Res.">
        <title>Newly introduced genomic prophage islands are critical determinants of in vivo competitiveness in the Liverpool epidemic strain of Pseudomonas aeruginosa.</title>
        <authorList>
            <person name="Winstanley C."/>
            <person name="Langille M.G.I."/>
            <person name="Fothergill J.L."/>
            <person name="Kukavica-Ibrulj I."/>
            <person name="Paradis-Bleau C."/>
            <person name="Sanschagrin F."/>
            <person name="Thomson N.R."/>
            <person name="Winsor G.L."/>
            <person name="Quail M.A."/>
            <person name="Lennard N."/>
            <person name="Bignell A."/>
            <person name="Clarke L."/>
            <person name="Seeger K."/>
            <person name="Saunders D."/>
            <person name="Harris D."/>
            <person name="Parkhill J."/>
            <person name="Hancock R.E.W."/>
            <person name="Brinkman F.S.L."/>
            <person name="Levesque R.C."/>
        </authorList>
    </citation>
    <scope>NUCLEOTIDE SEQUENCE [LARGE SCALE GENOMIC DNA]</scope>
    <source>
        <strain>LESB58</strain>
    </source>
</reference>
<keyword id="KW-0687">Ribonucleoprotein</keyword>
<keyword id="KW-0689">Ribosomal protein</keyword>
<keyword id="KW-0694">RNA-binding</keyword>
<keyword id="KW-0699">rRNA-binding</keyword>
<comment type="function">
    <text evidence="1">Binds together with bS18 to 16S ribosomal RNA.</text>
</comment>
<comment type="similarity">
    <text evidence="1">Belongs to the bacterial ribosomal protein bS6 family.</text>
</comment>
<feature type="chain" id="PRO_1000120789" description="Small ribosomal subunit protein bS6">
    <location>
        <begin position="1"/>
        <end position="139"/>
    </location>
</feature>
<feature type="region of interest" description="Disordered" evidence="2">
    <location>
        <begin position="95"/>
        <end position="139"/>
    </location>
</feature>
<feature type="compositionally biased region" description="Basic and acidic residues" evidence="2">
    <location>
        <begin position="95"/>
        <end position="121"/>
    </location>
</feature>
<feature type="compositionally biased region" description="Acidic residues" evidence="2">
    <location>
        <begin position="124"/>
        <end position="139"/>
    </location>
</feature>
<evidence type="ECO:0000255" key="1">
    <source>
        <dbReference type="HAMAP-Rule" id="MF_00360"/>
    </source>
</evidence>
<evidence type="ECO:0000256" key="2">
    <source>
        <dbReference type="SAM" id="MobiDB-lite"/>
    </source>
</evidence>
<evidence type="ECO:0000305" key="3"/>
<organism>
    <name type="scientific">Pseudomonas aeruginosa (strain LESB58)</name>
    <dbReference type="NCBI Taxonomy" id="557722"/>
    <lineage>
        <taxon>Bacteria</taxon>
        <taxon>Pseudomonadati</taxon>
        <taxon>Pseudomonadota</taxon>
        <taxon>Gammaproteobacteria</taxon>
        <taxon>Pseudomonadales</taxon>
        <taxon>Pseudomonadaceae</taxon>
        <taxon>Pseudomonas</taxon>
    </lineage>
</organism>
<dbReference type="EMBL" id="FM209186">
    <property type="protein sequence ID" value="CAW30075.1"/>
    <property type="molecule type" value="Genomic_DNA"/>
</dbReference>
<dbReference type="RefSeq" id="WP_003095636.1">
    <property type="nucleotide sequence ID" value="NC_011770.1"/>
</dbReference>
<dbReference type="SMR" id="B7V1Z8"/>
<dbReference type="GeneID" id="77223482"/>
<dbReference type="KEGG" id="pag:PLES_53211"/>
<dbReference type="HOGENOM" id="CLU_113441_6_1_6"/>
<dbReference type="GO" id="GO:0022627">
    <property type="term" value="C:cytosolic small ribosomal subunit"/>
    <property type="evidence" value="ECO:0007669"/>
    <property type="project" value="TreeGrafter"/>
</dbReference>
<dbReference type="GO" id="GO:0070181">
    <property type="term" value="F:small ribosomal subunit rRNA binding"/>
    <property type="evidence" value="ECO:0007669"/>
    <property type="project" value="TreeGrafter"/>
</dbReference>
<dbReference type="GO" id="GO:0003735">
    <property type="term" value="F:structural constituent of ribosome"/>
    <property type="evidence" value="ECO:0007669"/>
    <property type="project" value="InterPro"/>
</dbReference>
<dbReference type="GO" id="GO:0006412">
    <property type="term" value="P:translation"/>
    <property type="evidence" value="ECO:0007669"/>
    <property type="project" value="UniProtKB-UniRule"/>
</dbReference>
<dbReference type="CDD" id="cd00473">
    <property type="entry name" value="bS6"/>
    <property type="match status" value="1"/>
</dbReference>
<dbReference type="FunFam" id="3.30.70.60:FF:000003">
    <property type="entry name" value="30S ribosomal protein S6"/>
    <property type="match status" value="1"/>
</dbReference>
<dbReference type="Gene3D" id="3.30.70.60">
    <property type="match status" value="1"/>
</dbReference>
<dbReference type="HAMAP" id="MF_00360">
    <property type="entry name" value="Ribosomal_bS6"/>
    <property type="match status" value="1"/>
</dbReference>
<dbReference type="InterPro" id="IPR000529">
    <property type="entry name" value="Ribosomal_bS6"/>
</dbReference>
<dbReference type="InterPro" id="IPR020815">
    <property type="entry name" value="Ribosomal_bS6_CS"/>
</dbReference>
<dbReference type="InterPro" id="IPR035980">
    <property type="entry name" value="Ribosomal_bS6_sf"/>
</dbReference>
<dbReference type="InterPro" id="IPR020814">
    <property type="entry name" value="Ribosomal_S6_plastid/chlpt"/>
</dbReference>
<dbReference type="InterPro" id="IPR014717">
    <property type="entry name" value="Transl_elong_EF1B/ribsomal_bS6"/>
</dbReference>
<dbReference type="NCBIfam" id="TIGR00166">
    <property type="entry name" value="S6"/>
    <property type="match status" value="1"/>
</dbReference>
<dbReference type="PANTHER" id="PTHR21011">
    <property type="entry name" value="MITOCHONDRIAL 28S RIBOSOMAL PROTEIN S6"/>
    <property type="match status" value="1"/>
</dbReference>
<dbReference type="PANTHER" id="PTHR21011:SF1">
    <property type="entry name" value="SMALL RIBOSOMAL SUBUNIT PROTEIN BS6M"/>
    <property type="match status" value="1"/>
</dbReference>
<dbReference type="Pfam" id="PF01250">
    <property type="entry name" value="Ribosomal_S6"/>
    <property type="match status" value="1"/>
</dbReference>
<dbReference type="SUPFAM" id="SSF54995">
    <property type="entry name" value="Ribosomal protein S6"/>
    <property type="match status" value="1"/>
</dbReference>
<dbReference type="PROSITE" id="PS01048">
    <property type="entry name" value="RIBOSOMAL_S6"/>
    <property type="match status" value="1"/>
</dbReference>
<protein>
    <recommendedName>
        <fullName evidence="1">Small ribosomal subunit protein bS6</fullName>
    </recommendedName>
    <alternativeName>
        <fullName evidence="3">30S ribosomal protein S6</fullName>
    </alternativeName>
</protein>